<name>ST3A1_MOUSE</name>
<accession>O35403</accession>
<protein>
    <recommendedName>
        <fullName>Amine sulfotransferase</fullName>
        <ecNumber>2.8.2.3</ecNumber>
    </recommendedName>
    <alternativeName>
        <fullName>SULT-X2</fullName>
    </alternativeName>
    <alternativeName>
        <fullName>Sulfotransferase 3A1</fullName>
        <shortName>ST3A1</shortName>
    </alternativeName>
</protein>
<sequence length="293" mass="35181">MDNKDEYLLNFKGYNFQKTLVKMEVVENIENYEIRDDDIFIVTYPKSGTIWTQQILSLIYFEGHRNRTENIETIDRAPFFEYNIHKLDYAKMPSPRIFSSHIPYYLVPKGLKDKKAKILYMYRNPKDVLISYFHFSNLMLIFQNPDTVESFMQTFLDGDVVGSLWFDHIRGWYEHRHDFNIMFMSFEDMKKDFRSSVLKICSFLEKELSEEDVDAVVRQATFQKMKADPRANYEHIIKDELGTRNEMGSFLRKGVVGAWKHYLTVDQSERFDKIFHRNMKNIPLKFIWDINEE</sequence>
<organism>
    <name type="scientific">Mus musculus</name>
    <name type="common">Mouse</name>
    <dbReference type="NCBI Taxonomy" id="10090"/>
    <lineage>
        <taxon>Eukaryota</taxon>
        <taxon>Metazoa</taxon>
        <taxon>Chordata</taxon>
        <taxon>Craniata</taxon>
        <taxon>Vertebrata</taxon>
        <taxon>Euteleostomi</taxon>
        <taxon>Mammalia</taxon>
        <taxon>Eutheria</taxon>
        <taxon>Euarchontoglires</taxon>
        <taxon>Glires</taxon>
        <taxon>Rodentia</taxon>
        <taxon>Myomorpha</taxon>
        <taxon>Muroidea</taxon>
        <taxon>Muridae</taxon>
        <taxon>Murinae</taxon>
        <taxon>Mus</taxon>
        <taxon>Mus</taxon>
    </lineage>
</organism>
<comment type="function">
    <text evidence="1">Sulfotransferase that utilizes 3'-phospho-5'-adenylyl sulfate (PAPS) as sulfonate donor to catalyze the N-sulfonation of amines.</text>
</comment>
<comment type="catalytic activity">
    <reaction>
        <text>a primary amine + 3'-phosphoadenylyl sulfate = a sulfamate + adenosine 3',5'-bisphosphate + 2 H(+)</text>
        <dbReference type="Rhea" id="RHEA:24136"/>
        <dbReference type="ChEBI" id="CHEBI:15378"/>
        <dbReference type="ChEBI" id="CHEBI:58339"/>
        <dbReference type="ChEBI" id="CHEBI:58343"/>
        <dbReference type="ChEBI" id="CHEBI:65296"/>
        <dbReference type="ChEBI" id="CHEBI:131822"/>
        <dbReference type="EC" id="2.8.2.3"/>
    </reaction>
</comment>
<comment type="subcellular location">
    <subcellularLocation>
        <location evidence="1">Cytoplasm</location>
    </subcellularLocation>
</comment>
<comment type="similarity">
    <text evidence="2">Belongs to the sulfotransferase 1 family.</text>
</comment>
<evidence type="ECO:0000250" key="1"/>
<evidence type="ECO:0000305" key="2"/>
<evidence type="ECO:0007829" key="3">
    <source>
        <dbReference type="PDB" id="7V1O"/>
    </source>
</evidence>
<reference key="1">
    <citation type="journal article" date="1998" name="Biochem. Biophys. Res. Commun.">
        <title>Molecular cloning, expression, and functional characterization of novel mouse sulfotransferases.</title>
        <authorList>
            <person name="Sakakibara Y."/>
            <person name="Yanagisawa K."/>
            <person name="Takami Y."/>
            <person name="Nakayama T."/>
            <person name="Suiko M."/>
            <person name="Liu M.-C."/>
        </authorList>
    </citation>
    <scope>NUCLEOTIDE SEQUENCE [MRNA]</scope>
</reference>
<feature type="chain" id="PRO_0000085165" description="Amine sulfotransferase">
    <location>
        <begin position="1"/>
        <end position="293"/>
    </location>
</feature>
<feature type="active site" description="Proton acceptor" evidence="1">
    <location>
        <position position="101"/>
    </location>
</feature>
<feature type="binding site" evidence="1">
    <location>
        <begin position="46"/>
        <end position="51"/>
    </location>
    <ligand>
        <name>3'-phosphoadenylyl sulfate</name>
        <dbReference type="ChEBI" id="CHEBI:58339"/>
    </ligand>
</feature>
<feature type="binding site" evidence="1">
    <location>
        <position position="123"/>
    </location>
    <ligand>
        <name>3'-phosphoadenylyl sulfate</name>
        <dbReference type="ChEBI" id="CHEBI:58339"/>
    </ligand>
</feature>
<feature type="binding site" evidence="1">
    <location>
        <position position="131"/>
    </location>
    <ligand>
        <name>3'-phosphoadenylyl sulfate</name>
        <dbReference type="ChEBI" id="CHEBI:58339"/>
    </ligand>
</feature>
<feature type="binding site" evidence="1">
    <location>
        <begin position="220"/>
        <end position="225"/>
    </location>
    <ligand>
        <name>3'-phosphoadenylyl sulfate</name>
        <dbReference type="ChEBI" id="CHEBI:58339"/>
    </ligand>
</feature>
<feature type="binding site" evidence="1">
    <location>
        <begin position="252"/>
        <end position="254"/>
    </location>
    <ligand>
        <name>3'-phosphoadenylyl sulfate</name>
        <dbReference type="ChEBI" id="CHEBI:58339"/>
    </ligand>
</feature>
<feature type="turn" evidence="3">
    <location>
        <begin position="5"/>
        <end position="7"/>
    </location>
</feature>
<feature type="strand" evidence="3">
    <location>
        <begin position="8"/>
        <end position="11"/>
    </location>
</feature>
<feature type="strand" evidence="3">
    <location>
        <begin position="14"/>
        <end position="17"/>
    </location>
</feature>
<feature type="turn" evidence="3">
    <location>
        <begin position="18"/>
        <end position="20"/>
    </location>
</feature>
<feature type="helix" evidence="3">
    <location>
        <begin position="23"/>
        <end position="27"/>
    </location>
</feature>
<feature type="strand" evidence="3">
    <location>
        <begin position="39"/>
        <end position="43"/>
    </location>
</feature>
<feature type="helix" evidence="3">
    <location>
        <begin position="49"/>
        <end position="60"/>
    </location>
</feature>
<feature type="helix" evidence="3">
    <location>
        <begin position="62"/>
        <end position="65"/>
    </location>
</feature>
<feature type="helix" evidence="3">
    <location>
        <begin position="73"/>
        <end position="75"/>
    </location>
</feature>
<feature type="strand" evidence="3">
    <location>
        <begin position="79"/>
        <end position="81"/>
    </location>
</feature>
<feature type="helix" evidence="3">
    <location>
        <begin position="89"/>
        <end position="91"/>
    </location>
</feature>
<feature type="strand" evidence="3">
    <location>
        <begin position="97"/>
        <end position="100"/>
    </location>
</feature>
<feature type="helix" evidence="3">
    <location>
        <begin position="104"/>
        <end position="106"/>
    </location>
</feature>
<feature type="helix" evidence="3">
    <location>
        <begin position="109"/>
        <end position="113"/>
    </location>
</feature>
<feature type="strand" evidence="3">
    <location>
        <begin position="116"/>
        <end position="122"/>
    </location>
</feature>
<feature type="helix" evidence="3">
    <location>
        <begin position="125"/>
        <end position="138"/>
    </location>
</feature>
<feature type="helix" evidence="3">
    <location>
        <begin position="148"/>
        <end position="156"/>
    </location>
</feature>
<feature type="helix" evidence="3">
    <location>
        <begin position="165"/>
        <end position="173"/>
    </location>
</feature>
<feature type="helix" evidence="3">
    <location>
        <begin position="174"/>
        <end position="178"/>
    </location>
</feature>
<feature type="strand" evidence="3">
    <location>
        <begin position="179"/>
        <end position="185"/>
    </location>
</feature>
<feature type="helix" evidence="3">
    <location>
        <begin position="186"/>
        <end position="191"/>
    </location>
</feature>
<feature type="helix" evidence="3">
    <location>
        <begin position="193"/>
        <end position="203"/>
    </location>
</feature>
<feature type="helix" evidence="3">
    <location>
        <begin position="210"/>
        <end position="220"/>
    </location>
</feature>
<feature type="helix" evidence="3">
    <location>
        <begin position="222"/>
        <end position="226"/>
    </location>
</feature>
<feature type="turn" evidence="3">
    <location>
        <begin position="229"/>
        <end position="231"/>
    </location>
</feature>
<feature type="helix" evidence="3">
    <location>
        <begin position="234"/>
        <end position="239"/>
    </location>
</feature>
<feature type="strand" evidence="3">
    <location>
        <begin position="243"/>
        <end position="247"/>
    </location>
</feature>
<feature type="strand" evidence="3">
    <location>
        <begin position="250"/>
        <end position="252"/>
    </location>
</feature>
<feature type="helix" evidence="3">
    <location>
        <begin position="258"/>
        <end position="261"/>
    </location>
</feature>
<feature type="helix" evidence="3">
    <location>
        <begin position="265"/>
        <end position="279"/>
    </location>
</feature>
<keyword id="KW-0002">3D-structure</keyword>
<keyword id="KW-0963">Cytoplasm</keyword>
<keyword id="KW-1185">Reference proteome</keyword>
<keyword id="KW-0808">Transferase</keyword>
<dbReference type="EC" id="2.8.2.3"/>
<dbReference type="EMBL" id="AF026075">
    <property type="protein sequence ID" value="AAB82293.1"/>
    <property type="molecule type" value="mRNA"/>
</dbReference>
<dbReference type="CCDS" id="CCDS23771.1"/>
<dbReference type="PDB" id="7V1O">
    <property type="method" value="X-ray"/>
    <property type="resolution" value="2.40 A"/>
    <property type="chains" value="A/B=1-293"/>
</dbReference>
<dbReference type="PDBsum" id="7V1O"/>
<dbReference type="SMR" id="O35403"/>
<dbReference type="FunCoup" id="O35403">
    <property type="interactions" value="357"/>
</dbReference>
<dbReference type="STRING" id="10090.ENSMUSP00000151228"/>
<dbReference type="iPTMnet" id="O35403"/>
<dbReference type="PhosphoSitePlus" id="O35403"/>
<dbReference type="PaxDb" id="10090-ENSMUSP00000090259"/>
<dbReference type="AGR" id="MGI:1931469"/>
<dbReference type="MGI" id="MGI:1931469">
    <property type="gene designation" value="Sult3a1"/>
</dbReference>
<dbReference type="eggNOG" id="KOG1584">
    <property type="taxonomic scope" value="Eukaryota"/>
</dbReference>
<dbReference type="InParanoid" id="O35403"/>
<dbReference type="OrthoDB" id="205623at2759"/>
<dbReference type="PhylomeDB" id="O35403"/>
<dbReference type="BRENDA" id="2.8.2.3">
    <property type="organism ID" value="3474"/>
</dbReference>
<dbReference type="ChiTaRS" id="Sult3a1">
    <property type="organism name" value="mouse"/>
</dbReference>
<dbReference type="PRO" id="PR:O35403"/>
<dbReference type="Proteomes" id="UP000000589">
    <property type="component" value="Unplaced"/>
</dbReference>
<dbReference type="RNAct" id="O35403">
    <property type="molecule type" value="protein"/>
</dbReference>
<dbReference type="GO" id="GO:0005737">
    <property type="term" value="C:cytoplasm"/>
    <property type="evidence" value="ECO:0007669"/>
    <property type="project" value="UniProtKB-SubCell"/>
</dbReference>
<dbReference type="GO" id="GO:0047685">
    <property type="term" value="F:amine sulfotransferase activity"/>
    <property type="evidence" value="ECO:0007669"/>
    <property type="project" value="UniProtKB-EC"/>
</dbReference>
<dbReference type="GO" id="GO:0008146">
    <property type="term" value="F:sulfotransferase activity"/>
    <property type="evidence" value="ECO:0000314"/>
    <property type="project" value="MGI"/>
</dbReference>
<dbReference type="GO" id="GO:0051923">
    <property type="term" value="P:sulfation"/>
    <property type="evidence" value="ECO:0000314"/>
    <property type="project" value="MGI"/>
</dbReference>
<dbReference type="FunFam" id="3.40.50.300:FF:000433">
    <property type="entry name" value="Estrogen sulfotransferase"/>
    <property type="match status" value="1"/>
</dbReference>
<dbReference type="Gene3D" id="3.40.50.300">
    <property type="entry name" value="P-loop containing nucleotide triphosphate hydrolases"/>
    <property type="match status" value="1"/>
</dbReference>
<dbReference type="InterPro" id="IPR027417">
    <property type="entry name" value="P-loop_NTPase"/>
</dbReference>
<dbReference type="InterPro" id="IPR000863">
    <property type="entry name" value="Sulfotransferase_dom"/>
</dbReference>
<dbReference type="PANTHER" id="PTHR11783">
    <property type="entry name" value="SULFOTRANSFERASE SULT"/>
    <property type="match status" value="1"/>
</dbReference>
<dbReference type="Pfam" id="PF00685">
    <property type="entry name" value="Sulfotransfer_1"/>
    <property type="match status" value="1"/>
</dbReference>
<dbReference type="SUPFAM" id="SSF52540">
    <property type="entry name" value="P-loop containing nucleoside triphosphate hydrolases"/>
    <property type="match status" value="1"/>
</dbReference>
<proteinExistence type="evidence at protein level"/>
<gene>
    <name type="primary">Sult3a1</name>
    <name type="synonym">St3a1</name>
</gene>